<evidence type="ECO:0000250" key="1"/>
<evidence type="ECO:0000255" key="2">
    <source>
        <dbReference type="PROSITE-ProRule" id="PRU00051"/>
    </source>
</evidence>
<evidence type="ECO:0000305" key="3"/>
<sequence>MEKKITPSELELNEFIKIINEMSGIDLTDKKNILALKLNKFLEGTNTKNFSEFLGKLKSNRQLKQETLDFVTIGETYFLRELAQLKEIIYYAKSLEKRVNILSAPCSSGEEVYSLALLAAQNFIKDMYILGIDINSSVIEKAKLGKYQGRTLQRLSESEKRRFFLESEDKFYTINKNELCTCKFELCNVFEEKFSRLGKFDIIASRNMIIYFDHESKLKLMERFHRILNDKGRLYVGNADLIPETIYFKKIFSPRGVYYEKV</sequence>
<proteinExistence type="inferred from homology"/>
<comment type="function">
    <text evidence="1">Methylation of the membrane-bound methyl-accepting chemotaxis proteins (MCP) to form gamma-glutamyl methyl ester residues in MCP.</text>
</comment>
<comment type="catalytic activity">
    <reaction>
        <text>L-glutamyl-[protein] + S-adenosyl-L-methionine = [protein]-L-glutamate 5-O-methyl ester + S-adenosyl-L-homocysteine</text>
        <dbReference type="Rhea" id="RHEA:24452"/>
        <dbReference type="Rhea" id="RHEA-COMP:10208"/>
        <dbReference type="Rhea" id="RHEA-COMP:10311"/>
        <dbReference type="ChEBI" id="CHEBI:29973"/>
        <dbReference type="ChEBI" id="CHEBI:57856"/>
        <dbReference type="ChEBI" id="CHEBI:59789"/>
        <dbReference type="ChEBI" id="CHEBI:82795"/>
        <dbReference type="EC" id="2.1.1.80"/>
    </reaction>
</comment>
<comment type="sequence caution" evidence="3">
    <conflict type="frameshift">
        <sequence resource="EMBL-CDS" id="AAA02917"/>
    </conflict>
</comment>
<name>CHER_CAMJJ</name>
<gene>
    <name type="primary">cheR</name>
    <name type="ordered locus">CJJ81176_0930</name>
</gene>
<feature type="chain" id="PRO_0000281898" description="Chemotaxis protein methyltransferase">
    <location>
        <begin position="1"/>
        <end position="262"/>
    </location>
</feature>
<feature type="domain" description="CheR-type methyltransferase" evidence="2">
    <location>
        <begin position="1"/>
        <end position="262"/>
    </location>
</feature>
<feature type="binding site" evidence="1">
    <location>
        <position position="76"/>
    </location>
    <ligand>
        <name>S-adenosyl-L-methionine</name>
        <dbReference type="ChEBI" id="CHEBI:59789"/>
    </ligand>
</feature>
<feature type="binding site" evidence="1">
    <location>
        <position position="80"/>
    </location>
    <ligand>
        <name>S-adenosyl-L-methionine</name>
        <dbReference type="ChEBI" id="CHEBI:59789"/>
    </ligand>
</feature>
<feature type="binding site" evidence="1">
    <location>
        <position position="111"/>
    </location>
    <ligand>
        <name>S-adenosyl-L-methionine</name>
        <dbReference type="ChEBI" id="CHEBI:59789"/>
    </ligand>
</feature>
<feature type="binding site" evidence="1">
    <location>
        <position position="133"/>
    </location>
    <ligand>
        <name>S-adenosyl-L-methionine</name>
        <dbReference type="ChEBI" id="CHEBI:59789"/>
    </ligand>
</feature>
<feature type="binding site" evidence="1">
    <location>
        <begin position="188"/>
        <end position="189"/>
    </location>
    <ligand>
        <name>S-adenosyl-L-methionine</name>
        <dbReference type="ChEBI" id="CHEBI:59789"/>
    </ligand>
</feature>
<feature type="binding site" evidence="1">
    <location>
        <begin position="206"/>
        <end position="207"/>
    </location>
    <ligand>
        <name>S-adenosyl-L-methionine</name>
        <dbReference type="ChEBI" id="CHEBI:59789"/>
    </ligand>
</feature>
<feature type="sequence conflict" description="In Ref. 1; AAA02917." evidence="3" ref="1">
    <original>I</original>
    <variation>V</variation>
    <location>
        <position position="132"/>
    </location>
</feature>
<reference key="1">
    <citation type="journal article" date="1993" name="J. Biol. Chem.">
        <title>PEB1, the major cell-binding factor of Campylobacter jejuni, is a homolog of the binding component in Gram-negative nutrient transport systems.</title>
        <authorList>
            <person name="Pei Z."/>
            <person name="Blaser M.J."/>
        </authorList>
    </citation>
    <scope>NUCLEOTIDE SEQUENCE [GENOMIC DNA]</scope>
</reference>
<reference key="2">
    <citation type="submission" date="2006-12" db="EMBL/GenBank/DDBJ databases">
        <authorList>
            <person name="Fouts D.E."/>
            <person name="Nelson K.E."/>
            <person name="Sebastian Y."/>
        </authorList>
    </citation>
    <scope>NUCLEOTIDE SEQUENCE [LARGE SCALE GENOMIC DNA]</scope>
    <source>
        <strain>81-176</strain>
    </source>
</reference>
<protein>
    <recommendedName>
        <fullName>Chemotaxis protein methyltransferase</fullName>
        <ecNumber>2.1.1.80</ecNumber>
    </recommendedName>
</protein>
<accession>A1VZQ6</accession>
<accession>P45676</accession>
<accession>Q9PP10</accession>
<dbReference type="EC" id="2.1.1.80"/>
<dbReference type="EMBL" id="L13662">
    <property type="protein sequence ID" value="AAA02917.1"/>
    <property type="status" value="ALT_FRAME"/>
    <property type="molecule type" value="Unassigned_DNA"/>
</dbReference>
<dbReference type="EMBL" id="CP000538">
    <property type="protein sequence ID" value="EAQ71848.1"/>
    <property type="molecule type" value="Genomic_DNA"/>
</dbReference>
<dbReference type="RefSeq" id="WP_002865901.1">
    <property type="nucleotide sequence ID" value="NC_008787.1"/>
</dbReference>
<dbReference type="SMR" id="A1VZQ6"/>
<dbReference type="KEGG" id="cjj:CJJ81176_0930"/>
<dbReference type="eggNOG" id="COG1352">
    <property type="taxonomic scope" value="Bacteria"/>
</dbReference>
<dbReference type="HOGENOM" id="CLU_025854_0_1_7"/>
<dbReference type="Proteomes" id="UP000000646">
    <property type="component" value="Chromosome"/>
</dbReference>
<dbReference type="GO" id="GO:0008983">
    <property type="term" value="F:protein-glutamate O-methyltransferase activity"/>
    <property type="evidence" value="ECO:0007669"/>
    <property type="project" value="UniProtKB-EC"/>
</dbReference>
<dbReference type="GO" id="GO:0006935">
    <property type="term" value="P:chemotaxis"/>
    <property type="evidence" value="ECO:0007669"/>
    <property type="project" value="UniProtKB-KW"/>
</dbReference>
<dbReference type="GO" id="GO:0032259">
    <property type="term" value="P:methylation"/>
    <property type="evidence" value="ECO:0007669"/>
    <property type="project" value="UniProtKB-KW"/>
</dbReference>
<dbReference type="CDD" id="cd02440">
    <property type="entry name" value="AdoMet_MTases"/>
    <property type="match status" value="1"/>
</dbReference>
<dbReference type="Gene3D" id="1.10.155.10">
    <property type="entry name" value="Chemotaxis receptor methyltransferase CheR, N-terminal domain"/>
    <property type="match status" value="1"/>
</dbReference>
<dbReference type="Gene3D" id="3.40.50.150">
    <property type="entry name" value="Vaccinia Virus protein VP39"/>
    <property type="match status" value="1"/>
</dbReference>
<dbReference type="InterPro" id="IPR050903">
    <property type="entry name" value="Bact_Chemotaxis_MeTrfase"/>
</dbReference>
<dbReference type="InterPro" id="IPR022642">
    <property type="entry name" value="CheR_C"/>
</dbReference>
<dbReference type="InterPro" id="IPR000780">
    <property type="entry name" value="CheR_MeTrfase"/>
</dbReference>
<dbReference type="InterPro" id="IPR036804">
    <property type="entry name" value="CheR_N_sf"/>
</dbReference>
<dbReference type="InterPro" id="IPR029063">
    <property type="entry name" value="SAM-dependent_MTases_sf"/>
</dbReference>
<dbReference type="PANTHER" id="PTHR24422">
    <property type="entry name" value="CHEMOTAXIS PROTEIN METHYLTRANSFERASE"/>
    <property type="match status" value="1"/>
</dbReference>
<dbReference type="PANTHER" id="PTHR24422:SF19">
    <property type="entry name" value="CHEMOTAXIS PROTEIN METHYLTRANSFERASE"/>
    <property type="match status" value="1"/>
</dbReference>
<dbReference type="Pfam" id="PF01739">
    <property type="entry name" value="CheR"/>
    <property type="match status" value="1"/>
</dbReference>
<dbReference type="PRINTS" id="PR00996">
    <property type="entry name" value="CHERMTFRASE"/>
</dbReference>
<dbReference type="SMART" id="SM00138">
    <property type="entry name" value="MeTrc"/>
    <property type="match status" value="1"/>
</dbReference>
<dbReference type="SUPFAM" id="SSF47757">
    <property type="entry name" value="Chemotaxis receptor methyltransferase CheR, N-terminal domain"/>
    <property type="match status" value="1"/>
</dbReference>
<dbReference type="SUPFAM" id="SSF53335">
    <property type="entry name" value="S-adenosyl-L-methionine-dependent methyltransferases"/>
    <property type="match status" value="1"/>
</dbReference>
<dbReference type="PROSITE" id="PS50123">
    <property type="entry name" value="CHER"/>
    <property type="match status" value="1"/>
</dbReference>
<keyword id="KW-0145">Chemotaxis</keyword>
<keyword id="KW-0489">Methyltransferase</keyword>
<keyword id="KW-0949">S-adenosyl-L-methionine</keyword>
<keyword id="KW-0808">Transferase</keyword>
<organism>
    <name type="scientific">Campylobacter jejuni subsp. jejuni serotype O:23/36 (strain 81-176)</name>
    <dbReference type="NCBI Taxonomy" id="354242"/>
    <lineage>
        <taxon>Bacteria</taxon>
        <taxon>Pseudomonadati</taxon>
        <taxon>Campylobacterota</taxon>
        <taxon>Epsilonproteobacteria</taxon>
        <taxon>Campylobacterales</taxon>
        <taxon>Campylobacteraceae</taxon>
        <taxon>Campylobacter</taxon>
    </lineage>
</organism>